<sequence>MELQLAIDLLNKEDAAELANKVKDYVDIVEIGTPIIYNEGLPAVKHMADNISNVKVLADMKIMDAADYEVSQAIKFGADVITILGVAEDASIKAAIEEAHKNNKQLLVDMIAVQDLEKRAKELDEMGADYIAVHTGYDLQAEGQSPLESLRTVKSVIKNSKVAVAGGIKPDTIKEIVAESPDLVIVGGGIANADDPVEAAKQCRAAIEGK</sequence>
<organism>
    <name type="scientific">Staphylococcus aureus (strain MSSA476)</name>
    <dbReference type="NCBI Taxonomy" id="282459"/>
    <lineage>
        <taxon>Bacteria</taxon>
        <taxon>Bacillati</taxon>
        <taxon>Bacillota</taxon>
        <taxon>Bacilli</taxon>
        <taxon>Bacillales</taxon>
        <taxon>Staphylococcaceae</taxon>
        <taxon>Staphylococcus</taxon>
    </lineage>
</organism>
<gene>
    <name type="ordered locus">SAS0528</name>
</gene>
<dbReference type="EC" id="4.1.2.43"/>
<dbReference type="EMBL" id="BX571857">
    <property type="protein sequence ID" value="CAG42303.1"/>
    <property type="molecule type" value="Genomic_DNA"/>
</dbReference>
<dbReference type="SMR" id="Q6GBR7"/>
<dbReference type="KEGG" id="sas:SAS0528"/>
<dbReference type="HOGENOM" id="CLU_081825_1_0_9"/>
<dbReference type="UniPathway" id="UPA00294">
    <property type="reaction ID" value="UER00434"/>
</dbReference>
<dbReference type="GO" id="GO:0033982">
    <property type="term" value="F:3-dehydro-L-gulonate-6-phosphate decarboxylase activity"/>
    <property type="evidence" value="ECO:0007669"/>
    <property type="project" value="TreeGrafter"/>
</dbReference>
<dbReference type="GO" id="GO:0043801">
    <property type="term" value="F:hexulose-6-phosphate synthase activity"/>
    <property type="evidence" value="ECO:0007669"/>
    <property type="project" value="UniProtKB-EC"/>
</dbReference>
<dbReference type="GO" id="GO:0004590">
    <property type="term" value="F:orotidine-5'-phosphate decarboxylase activity"/>
    <property type="evidence" value="ECO:0007669"/>
    <property type="project" value="InterPro"/>
</dbReference>
<dbReference type="GO" id="GO:0006207">
    <property type="term" value="P:'de novo' pyrimidine nucleobase biosynthetic process"/>
    <property type="evidence" value="ECO:0007669"/>
    <property type="project" value="InterPro"/>
</dbReference>
<dbReference type="GO" id="GO:0019647">
    <property type="term" value="P:formaldehyde assimilation via ribulose monophosphate cycle"/>
    <property type="evidence" value="ECO:0007669"/>
    <property type="project" value="UniProtKB-UniPathway"/>
</dbReference>
<dbReference type="GO" id="GO:0019854">
    <property type="term" value="P:L-ascorbic acid catabolic process"/>
    <property type="evidence" value="ECO:0007669"/>
    <property type="project" value="TreeGrafter"/>
</dbReference>
<dbReference type="GO" id="GO:0006730">
    <property type="term" value="P:one-carbon metabolic process"/>
    <property type="evidence" value="ECO:0007669"/>
    <property type="project" value="UniProtKB-KW"/>
</dbReference>
<dbReference type="CDD" id="cd04726">
    <property type="entry name" value="KGPDC_HPS"/>
    <property type="match status" value="1"/>
</dbReference>
<dbReference type="FunFam" id="3.20.20.70:FF:000022">
    <property type="entry name" value="3-keto-L-gulonate-6-phosphate decarboxylase UlaD"/>
    <property type="match status" value="1"/>
</dbReference>
<dbReference type="Gene3D" id="3.20.20.70">
    <property type="entry name" value="Aldolase class I"/>
    <property type="match status" value="1"/>
</dbReference>
<dbReference type="InterPro" id="IPR017553">
    <property type="entry name" value="3-hexulose-6-phosphate_synth"/>
</dbReference>
<dbReference type="InterPro" id="IPR013785">
    <property type="entry name" value="Aldolase_TIM"/>
</dbReference>
<dbReference type="InterPro" id="IPR041710">
    <property type="entry name" value="HPS/KGPDC"/>
</dbReference>
<dbReference type="InterPro" id="IPR001754">
    <property type="entry name" value="OMPdeCOase_dom"/>
</dbReference>
<dbReference type="InterPro" id="IPR011060">
    <property type="entry name" value="RibuloseP-bd_barrel"/>
</dbReference>
<dbReference type="NCBIfam" id="TIGR03128">
    <property type="entry name" value="RuMP_HxlA"/>
    <property type="match status" value="1"/>
</dbReference>
<dbReference type="PANTHER" id="PTHR35039">
    <property type="entry name" value="3-KETO-L-GULONATE-6-PHOSPHATE DECARBOXYLASE SGBH-RELATED"/>
    <property type="match status" value="1"/>
</dbReference>
<dbReference type="PANTHER" id="PTHR35039:SF3">
    <property type="entry name" value="3-KETO-L-GULONATE-6-PHOSPHATE DECARBOXYLASE SGBH-RELATED"/>
    <property type="match status" value="1"/>
</dbReference>
<dbReference type="Pfam" id="PF00215">
    <property type="entry name" value="OMPdecase"/>
    <property type="match status" value="1"/>
</dbReference>
<dbReference type="SMART" id="SM00934">
    <property type="entry name" value="OMPdecase"/>
    <property type="match status" value="1"/>
</dbReference>
<dbReference type="SUPFAM" id="SSF51366">
    <property type="entry name" value="Ribulose-phoshate binding barrel"/>
    <property type="match status" value="1"/>
</dbReference>
<protein>
    <recommendedName>
        <fullName>3-hexulose-6-phosphate synthase</fullName>
        <shortName>HPS</shortName>
        <ecNumber>4.1.2.43</ecNumber>
    </recommendedName>
    <alternativeName>
        <fullName>D-arabino-3-hexulose-6-phosphate formaldehyde lyase</fullName>
    </alternativeName>
</protein>
<comment type="function">
    <text evidence="1">Catalyzes the condensation of ribulose 5-phosphate with formaldehyde to form 3-hexulose 6-phosphate.</text>
</comment>
<comment type="catalytic activity">
    <reaction>
        <text>D-ribulose 5-phosphate + formaldehyde = D-arabino-hex-3-ulose 6-phosphate</text>
        <dbReference type="Rhea" id="RHEA:25201"/>
        <dbReference type="ChEBI" id="CHEBI:16842"/>
        <dbReference type="ChEBI" id="CHEBI:58121"/>
        <dbReference type="ChEBI" id="CHEBI:58542"/>
        <dbReference type="EC" id="4.1.2.43"/>
    </reaction>
</comment>
<comment type="pathway">
    <text>One-carbon metabolism; formaldehyde assimilation via RuMP pathway; D-fructose 6-phosphate from D-ribulose 5-phosphate and formaldehyde: step 1/2.</text>
</comment>
<comment type="similarity">
    <text evidence="2">Belongs to the HPS/KGPDC family. HPS subfamily.</text>
</comment>
<reference key="1">
    <citation type="journal article" date="2004" name="Proc. Natl. Acad. Sci. U.S.A.">
        <title>Complete genomes of two clinical Staphylococcus aureus strains: evidence for the rapid evolution of virulence and drug resistance.</title>
        <authorList>
            <person name="Holden M.T.G."/>
            <person name="Feil E.J."/>
            <person name="Lindsay J.A."/>
            <person name="Peacock S.J."/>
            <person name="Day N.P.J."/>
            <person name="Enright M.C."/>
            <person name="Foster T.J."/>
            <person name="Moore C.E."/>
            <person name="Hurst L."/>
            <person name="Atkin R."/>
            <person name="Barron A."/>
            <person name="Bason N."/>
            <person name="Bentley S.D."/>
            <person name="Chillingworth C."/>
            <person name="Chillingworth T."/>
            <person name="Churcher C."/>
            <person name="Clark L."/>
            <person name="Corton C."/>
            <person name="Cronin A."/>
            <person name="Doggett J."/>
            <person name="Dowd L."/>
            <person name="Feltwell T."/>
            <person name="Hance Z."/>
            <person name="Harris B."/>
            <person name="Hauser H."/>
            <person name="Holroyd S."/>
            <person name="Jagels K."/>
            <person name="James K.D."/>
            <person name="Lennard N."/>
            <person name="Line A."/>
            <person name="Mayes R."/>
            <person name="Moule S."/>
            <person name="Mungall K."/>
            <person name="Ormond D."/>
            <person name="Quail M.A."/>
            <person name="Rabbinowitsch E."/>
            <person name="Rutherford K.M."/>
            <person name="Sanders M."/>
            <person name="Sharp S."/>
            <person name="Simmonds M."/>
            <person name="Stevens K."/>
            <person name="Whitehead S."/>
            <person name="Barrell B.G."/>
            <person name="Spratt B.G."/>
            <person name="Parkhill J."/>
        </authorList>
    </citation>
    <scope>NUCLEOTIDE SEQUENCE [LARGE SCALE GENOMIC DNA]</scope>
    <source>
        <strain>MSSA476</strain>
    </source>
</reference>
<evidence type="ECO:0000250" key="1"/>
<evidence type="ECO:0000305" key="2"/>
<proteinExistence type="inferred from homology"/>
<feature type="chain" id="PRO_0000269522" description="3-hexulose-6-phosphate synthase">
    <location>
        <begin position="1"/>
        <end position="210"/>
    </location>
</feature>
<accession>Q6GBR7</accession>
<keyword id="KW-0119">Carbohydrate metabolism</keyword>
<keyword id="KW-0456">Lyase</keyword>
<keyword id="KW-0554">One-carbon metabolism</keyword>
<name>HPS_STAAS</name>